<proteinExistence type="inferred from homology"/>
<name>SCPB_CLOAB</name>
<gene>
    <name evidence="1" type="primary">scpB</name>
    <name type="ordered locus">CA_C2060</name>
</gene>
<feature type="chain" id="PRO_0000211128" description="Segregation and condensation protein B">
    <location>
        <begin position="1"/>
        <end position="202"/>
    </location>
</feature>
<evidence type="ECO:0000255" key="1">
    <source>
        <dbReference type="HAMAP-Rule" id="MF_01804"/>
    </source>
</evidence>
<protein>
    <recommendedName>
        <fullName evidence="1">Segregation and condensation protein B</fullName>
    </recommendedName>
</protein>
<keyword id="KW-0131">Cell cycle</keyword>
<keyword id="KW-0132">Cell division</keyword>
<keyword id="KW-0159">Chromosome partition</keyword>
<keyword id="KW-0963">Cytoplasm</keyword>
<keyword id="KW-1185">Reference proteome</keyword>
<accession>Q97HF1</accession>
<dbReference type="EMBL" id="AE001437">
    <property type="protein sequence ID" value="AAK80019.1"/>
    <property type="molecule type" value="Genomic_DNA"/>
</dbReference>
<dbReference type="PIR" id="H97153">
    <property type="entry name" value="H97153"/>
</dbReference>
<dbReference type="RefSeq" id="NP_348679.1">
    <property type="nucleotide sequence ID" value="NC_003030.1"/>
</dbReference>
<dbReference type="RefSeq" id="WP_010965360.1">
    <property type="nucleotide sequence ID" value="NC_003030.1"/>
</dbReference>
<dbReference type="SMR" id="Q97HF1"/>
<dbReference type="STRING" id="272562.CA_C2060"/>
<dbReference type="GeneID" id="44998544"/>
<dbReference type="KEGG" id="cac:CA_C2060"/>
<dbReference type="PATRIC" id="fig|272562.8.peg.2266"/>
<dbReference type="eggNOG" id="COG1386">
    <property type="taxonomic scope" value="Bacteria"/>
</dbReference>
<dbReference type="HOGENOM" id="CLU_045647_5_3_9"/>
<dbReference type="OrthoDB" id="9806226at2"/>
<dbReference type="Proteomes" id="UP000000814">
    <property type="component" value="Chromosome"/>
</dbReference>
<dbReference type="GO" id="GO:0005737">
    <property type="term" value="C:cytoplasm"/>
    <property type="evidence" value="ECO:0007669"/>
    <property type="project" value="UniProtKB-SubCell"/>
</dbReference>
<dbReference type="GO" id="GO:0051301">
    <property type="term" value="P:cell division"/>
    <property type="evidence" value="ECO:0007669"/>
    <property type="project" value="UniProtKB-KW"/>
</dbReference>
<dbReference type="GO" id="GO:0051304">
    <property type="term" value="P:chromosome separation"/>
    <property type="evidence" value="ECO:0007669"/>
    <property type="project" value="InterPro"/>
</dbReference>
<dbReference type="GO" id="GO:0006260">
    <property type="term" value="P:DNA replication"/>
    <property type="evidence" value="ECO:0007669"/>
    <property type="project" value="UniProtKB-UniRule"/>
</dbReference>
<dbReference type="Gene3D" id="1.10.10.10">
    <property type="entry name" value="Winged helix-like DNA-binding domain superfamily/Winged helix DNA-binding domain"/>
    <property type="match status" value="2"/>
</dbReference>
<dbReference type="HAMAP" id="MF_01804">
    <property type="entry name" value="ScpB"/>
    <property type="match status" value="1"/>
</dbReference>
<dbReference type="InterPro" id="IPR005234">
    <property type="entry name" value="ScpB_csome_segregation"/>
</dbReference>
<dbReference type="InterPro" id="IPR036388">
    <property type="entry name" value="WH-like_DNA-bd_sf"/>
</dbReference>
<dbReference type="InterPro" id="IPR036390">
    <property type="entry name" value="WH_DNA-bd_sf"/>
</dbReference>
<dbReference type="NCBIfam" id="TIGR00281">
    <property type="entry name" value="SMC-Scp complex subunit ScpB"/>
    <property type="match status" value="1"/>
</dbReference>
<dbReference type="PANTHER" id="PTHR34298">
    <property type="entry name" value="SEGREGATION AND CONDENSATION PROTEIN B"/>
    <property type="match status" value="1"/>
</dbReference>
<dbReference type="PANTHER" id="PTHR34298:SF2">
    <property type="entry name" value="SEGREGATION AND CONDENSATION PROTEIN B"/>
    <property type="match status" value="1"/>
</dbReference>
<dbReference type="Pfam" id="PF04079">
    <property type="entry name" value="SMC_ScpB"/>
    <property type="match status" value="1"/>
</dbReference>
<dbReference type="PIRSF" id="PIRSF019345">
    <property type="entry name" value="ScpB"/>
    <property type="match status" value="1"/>
</dbReference>
<dbReference type="SUPFAM" id="SSF46785">
    <property type="entry name" value="Winged helix' DNA-binding domain"/>
    <property type="match status" value="2"/>
</dbReference>
<comment type="function">
    <text evidence="1">Participates in chromosomal partition during cell division. May act via the formation of a condensin-like complex containing Smc and ScpA that pull DNA away from mid-cell into both cell halves.</text>
</comment>
<comment type="subunit">
    <text evidence="1">Homodimer. Homodimerization may be required to stabilize the binding of ScpA to the Smc head domains. Component of a cohesin-like complex composed of ScpA, ScpB and the Smc homodimer, in which ScpA and ScpB bind to the head domain of Smc. The presence of the three proteins is required for the association of the complex with DNA.</text>
</comment>
<comment type="subcellular location">
    <subcellularLocation>
        <location evidence="1">Cytoplasm</location>
    </subcellularLocation>
    <text evidence="1">Associated with two foci at the outer edges of the nucleoid region in young cells, and at four foci within both cell halves in older cells.</text>
</comment>
<comment type="similarity">
    <text evidence="1">Belongs to the ScpB family.</text>
</comment>
<sequence>MNKINESQLEMDEISKKELHESIIESLLFVSGEPLKLKQISAILECTTKRAQEVLNNMMLKYNDNCRGVKLININDSYQLVTKNENSDYVRKLLKTNTRQALSQAALETLAIIAYKQPITRIDVDEIRGVKSDRAILTLQEKKLIQECGRLDVPGRPILYETTDEFLKNFNLGNIDELPPMEQIASELDEVAVDEEVKEGTE</sequence>
<organism>
    <name type="scientific">Clostridium acetobutylicum (strain ATCC 824 / DSM 792 / JCM 1419 / IAM 19013 / LMG 5710 / NBRC 13948 / NRRL B-527 / VKM B-1787 / 2291 / W)</name>
    <dbReference type="NCBI Taxonomy" id="272562"/>
    <lineage>
        <taxon>Bacteria</taxon>
        <taxon>Bacillati</taxon>
        <taxon>Bacillota</taxon>
        <taxon>Clostridia</taxon>
        <taxon>Eubacteriales</taxon>
        <taxon>Clostridiaceae</taxon>
        <taxon>Clostridium</taxon>
    </lineage>
</organism>
<reference key="1">
    <citation type="journal article" date="2001" name="J. Bacteriol.">
        <title>Genome sequence and comparative analysis of the solvent-producing bacterium Clostridium acetobutylicum.</title>
        <authorList>
            <person name="Noelling J."/>
            <person name="Breton G."/>
            <person name="Omelchenko M.V."/>
            <person name="Makarova K.S."/>
            <person name="Zeng Q."/>
            <person name="Gibson R."/>
            <person name="Lee H.M."/>
            <person name="Dubois J."/>
            <person name="Qiu D."/>
            <person name="Hitti J."/>
            <person name="Wolf Y.I."/>
            <person name="Tatusov R.L."/>
            <person name="Sabathe F."/>
            <person name="Doucette-Stamm L.A."/>
            <person name="Soucaille P."/>
            <person name="Daly M.J."/>
            <person name="Bennett G.N."/>
            <person name="Koonin E.V."/>
            <person name="Smith D.R."/>
        </authorList>
    </citation>
    <scope>NUCLEOTIDE SEQUENCE [LARGE SCALE GENOMIC DNA]</scope>
    <source>
        <strain>ATCC 824 / DSM 792 / JCM 1419 / IAM 19013 / LMG 5710 / NBRC 13948 / NRRL B-527 / VKM B-1787 / 2291 / W</strain>
    </source>
</reference>